<comment type="function">
    <text evidence="1">Allows the formation of correctly charged Asn-tRNA(Asn) or Gln-tRNA(Gln) through the transamidation of misacylated Asp-tRNA(Asn) or Glu-tRNA(Gln) in organisms which lack either or both of asparaginyl-tRNA or glutaminyl-tRNA synthetases. The reaction takes place in the presence of glutamine and ATP through an activated phospho-Asp-tRNA(Asn) or phospho-Glu-tRNA(Gln).</text>
</comment>
<comment type="catalytic activity">
    <reaction evidence="1">
        <text>L-glutamyl-tRNA(Gln) + L-glutamine + ATP + H2O = L-glutaminyl-tRNA(Gln) + L-glutamate + ADP + phosphate + H(+)</text>
        <dbReference type="Rhea" id="RHEA:17521"/>
        <dbReference type="Rhea" id="RHEA-COMP:9681"/>
        <dbReference type="Rhea" id="RHEA-COMP:9684"/>
        <dbReference type="ChEBI" id="CHEBI:15377"/>
        <dbReference type="ChEBI" id="CHEBI:15378"/>
        <dbReference type="ChEBI" id="CHEBI:29985"/>
        <dbReference type="ChEBI" id="CHEBI:30616"/>
        <dbReference type="ChEBI" id="CHEBI:43474"/>
        <dbReference type="ChEBI" id="CHEBI:58359"/>
        <dbReference type="ChEBI" id="CHEBI:78520"/>
        <dbReference type="ChEBI" id="CHEBI:78521"/>
        <dbReference type="ChEBI" id="CHEBI:456216"/>
    </reaction>
</comment>
<comment type="catalytic activity">
    <reaction evidence="1">
        <text>L-aspartyl-tRNA(Asn) + L-glutamine + ATP + H2O = L-asparaginyl-tRNA(Asn) + L-glutamate + ADP + phosphate + 2 H(+)</text>
        <dbReference type="Rhea" id="RHEA:14513"/>
        <dbReference type="Rhea" id="RHEA-COMP:9674"/>
        <dbReference type="Rhea" id="RHEA-COMP:9677"/>
        <dbReference type="ChEBI" id="CHEBI:15377"/>
        <dbReference type="ChEBI" id="CHEBI:15378"/>
        <dbReference type="ChEBI" id="CHEBI:29985"/>
        <dbReference type="ChEBI" id="CHEBI:30616"/>
        <dbReference type="ChEBI" id="CHEBI:43474"/>
        <dbReference type="ChEBI" id="CHEBI:58359"/>
        <dbReference type="ChEBI" id="CHEBI:78515"/>
        <dbReference type="ChEBI" id="CHEBI:78516"/>
        <dbReference type="ChEBI" id="CHEBI:456216"/>
    </reaction>
</comment>
<comment type="subunit">
    <text evidence="1">Heterotrimer of A, B and C subunits.</text>
</comment>
<comment type="similarity">
    <text evidence="1">Belongs to the GatC family.</text>
</comment>
<protein>
    <recommendedName>
        <fullName evidence="1">Aspartyl/glutamyl-tRNA(Asn/Gln) amidotransferase subunit C</fullName>
        <shortName evidence="1">Asp/Glu-ADT subunit C</shortName>
        <ecNumber evidence="1">6.3.5.-</ecNumber>
    </recommendedName>
</protein>
<gene>
    <name evidence="1" type="primary">gatC</name>
    <name type="ordered locus">Deide_05330</name>
</gene>
<evidence type="ECO:0000255" key="1">
    <source>
        <dbReference type="HAMAP-Rule" id="MF_00122"/>
    </source>
</evidence>
<feature type="chain" id="PRO_1000203067" description="Aspartyl/glutamyl-tRNA(Asn/Gln) amidotransferase subunit C">
    <location>
        <begin position="1"/>
        <end position="96"/>
    </location>
</feature>
<organism>
    <name type="scientific">Deinococcus deserti (strain DSM 17065 / CIP 109153 / LMG 22923 / VCD115)</name>
    <dbReference type="NCBI Taxonomy" id="546414"/>
    <lineage>
        <taxon>Bacteria</taxon>
        <taxon>Thermotogati</taxon>
        <taxon>Deinococcota</taxon>
        <taxon>Deinococci</taxon>
        <taxon>Deinococcales</taxon>
        <taxon>Deinococcaceae</taxon>
        <taxon>Deinococcus</taxon>
    </lineage>
</organism>
<sequence length="96" mass="10729">MIDAAQLDHLAQLARLHLKPEEREAMTADLNSILGYFEQLREVNTDGVEEMQRPVNLVNVLRDDVPGEVFAPEVVEALAPEMHGGQIRVPRTVEAD</sequence>
<keyword id="KW-0067">ATP-binding</keyword>
<keyword id="KW-0436">Ligase</keyword>
<keyword id="KW-0547">Nucleotide-binding</keyword>
<keyword id="KW-0648">Protein biosynthesis</keyword>
<keyword id="KW-1185">Reference proteome</keyword>
<accession>C1D0J7</accession>
<dbReference type="EC" id="6.3.5.-" evidence="1"/>
<dbReference type="EMBL" id="CP001114">
    <property type="protein sequence ID" value="ACO45371.1"/>
    <property type="molecule type" value="Genomic_DNA"/>
</dbReference>
<dbReference type="RefSeq" id="WP_012692494.1">
    <property type="nucleotide sequence ID" value="NC_012526.1"/>
</dbReference>
<dbReference type="SMR" id="C1D0J7"/>
<dbReference type="STRING" id="546414.Deide_05330"/>
<dbReference type="PaxDb" id="546414-Deide_05330"/>
<dbReference type="KEGG" id="ddr:Deide_05330"/>
<dbReference type="eggNOG" id="COG0721">
    <property type="taxonomic scope" value="Bacteria"/>
</dbReference>
<dbReference type="HOGENOM" id="CLU_105899_1_1_0"/>
<dbReference type="OrthoDB" id="9813938at2"/>
<dbReference type="Proteomes" id="UP000002208">
    <property type="component" value="Chromosome"/>
</dbReference>
<dbReference type="GO" id="GO:0050566">
    <property type="term" value="F:asparaginyl-tRNA synthase (glutamine-hydrolyzing) activity"/>
    <property type="evidence" value="ECO:0007669"/>
    <property type="project" value="RHEA"/>
</dbReference>
<dbReference type="GO" id="GO:0005524">
    <property type="term" value="F:ATP binding"/>
    <property type="evidence" value="ECO:0007669"/>
    <property type="project" value="UniProtKB-KW"/>
</dbReference>
<dbReference type="GO" id="GO:0050567">
    <property type="term" value="F:glutaminyl-tRNA synthase (glutamine-hydrolyzing) activity"/>
    <property type="evidence" value="ECO:0007669"/>
    <property type="project" value="UniProtKB-UniRule"/>
</dbReference>
<dbReference type="GO" id="GO:0070681">
    <property type="term" value="P:glutaminyl-tRNAGln biosynthesis via transamidation"/>
    <property type="evidence" value="ECO:0007669"/>
    <property type="project" value="TreeGrafter"/>
</dbReference>
<dbReference type="GO" id="GO:0006450">
    <property type="term" value="P:regulation of translational fidelity"/>
    <property type="evidence" value="ECO:0007669"/>
    <property type="project" value="InterPro"/>
</dbReference>
<dbReference type="GO" id="GO:0006412">
    <property type="term" value="P:translation"/>
    <property type="evidence" value="ECO:0007669"/>
    <property type="project" value="UniProtKB-UniRule"/>
</dbReference>
<dbReference type="Gene3D" id="1.10.20.60">
    <property type="entry name" value="Glu-tRNAGln amidotransferase C subunit, N-terminal domain"/>
    <property type="match status" value="1"/>
</dbReference>
<dbReference type="HAMAP" id="MF_00122">
    <property type="entry name" value="GatC"/>
    <property type="match status" value="1"/>
</dbReference>
<dbReference type="InterPro" id="IPR036113">
    <property type="entry name" value="Asp/Glu-ADT_sf_sub_c"/>
</dbReference>
<dbReference type="InterPro" id="IPR003837">
    <property type="entry name" value="GatC"/>
</dbReference>
<dbReference type="NCBIfam" id="TIGR00135">
    <property type="entry name" value="gatC"/>
    <property type="match status" value="1"/>
</dbReference>
<dbReference type="PANTHER" id="PTHR15004">
    <property type="entry name" value="GLUTAMYL-TRNA(GLN) AMIDOTRANSFERASE SUBUNIT C, MITOCHONDRIAL"/>
    <property type="match status" value="1"/>
</dbReference>
<dbReference type="PANTHER" id="PTHR15004:SF0">
    <property type="entry name" value="GLUTAMYL-TRNA(GLN) AMIDOTRANSFERASE SUBUNIT C, MITOCHONDRIAL"/>
    <property type="match status" value="1"/>
</dbReference>
<dbReference type="Pfam" id="PF02686">
    <property type="entry name" value="GatC"/>
    <property type="match status" value="1"/>
</dbReference>
<dbReference type="SUPFAM" id="SSF141000">
    <property type="entry name" value="Glu-tRNAGln amidotransferase C subunit"/>
    <property type="match status" value="1"/>
</dbReference>
<reference key="1">
    <citation type="journal article" date="2009" name="PLoS Genet.">
        <title>Alliance of proteomics and genomics to unravel the specificities of Sahara bacterium Deinococcus deserti.</title>
        <authorList>
            <person name="de Groot A."/>
            <person name="Dulermo R."/>
            <person name="Ortet P."/>
            <person name="Blanchard L."/>
            <person name="Guerin P."/>
            <person name="Fernandez B."/>
            <person name="Vacherie B."/>
            <person name="Dossat C."/>
            <person name="Jolivet E."/>
            <person name="Siguier P."/>
            <person name="Chandler M."/>
            <person name="Barakat M."/>
            <person name="Dedieu A."/>
            <person name="Barbe V."/>
            <person name="Heulin T."/>
            <person name="Sommer S."/>
            <person name="Achouak W."/>
            <person name="Armengaud J."/>
        </authorList>
    </citation>
    <scope>NUCLEOTIDE SEQUENCE [LARGE SCALE GENOMIC DNA]</scope>
    <source>
        <strain>DSM 17065 / CIP 109153 / LMG 22923 / VCD115</strain>
    </source>
</reference>
<proteinExistence type="inferred from homology"/>
<name>GATC_DEIDV</name>